<reference key="1">
    <citation type="journal article" date="2005" name="Proc. Natl. Acad. Sci. U.S.A.">
        <title>Comparison of the complete genome sequences of Pseudomonas syringae pv. syringae B728a and pv. tomato DC3000.</title>
        <authorList>
            <person name="Feil H."/>
            <person name="Feil W.S."/>
            <person name="Chain P."/>
            <person name="Larimer F."/>
            <person name="Dibartolo G."/>
            <person name="Copeland A."/>
            <person name="Lykidis A."/>
            <person name="Trong S."/>
            <person name="Nolan M."/>
            <person name="Goltsman E."/>
            <person name="Thiel J."/>
            <person name="Malfatti S."/>
            <person name="Loper J.E."/>
            <person name="Lapidus A."/>
            <person name="Detter J.C."/>
            <person name="Land M."/>
            <person name="Richardson P.M."/>
            <person name="Kyrpides N.C."/>
            <person name="Ivanova N."/>
            <person name="Lindow S.E."/>
        </authorList>
    </citation>
    <scope>NUCLEOTIDE SEQUENCE [LARGE SCALE GENOMIC DNA]</scope>
    <source>
        <strain>B728a</strain>
    </source>
</reference>
<gene>
    <name evidence="1" type="primary">xerC</name>
    <name type="ordered locus">Psyr_0185</name>
</gene>
<proteinExistence type="inferred from homology"/>
<sequence>MDQHLDAYCMHLRSERQVSPHTLEAYRRDLGKVLAYCQKAQVSSWSDLDIQHLRSFTARQHQQGQSSRSLARMLSAVRGFYKYLNREGICQHDPANGLSPPKGERRLPKTLDTDRAAQLLDGGVEDDFLAHRDQAILELLYSSGLRLSELTGLNLDQLDLRDGLVQVLGKGSKTRVLPVGSKARQALEVWLPLRALTNPQDDAVFVSQQGKRLGPRAIQVRLKAAGERELGQNLHPHMLRHSFASHLLESSQDLRAVQELLGHADIKTTQIYTHLDFQHLATVYDSAHPRAKRKGTADD</sequence>
<feature type="chain" id="PRO_1000070030" description="Tyrosine recombinase XerC">
    <location>
        <begin position="1"/>
        <end position="299"/>
    </location>
</feature>
<feature type="domain" description="Core-binding (CB)" evidence="3">
    <location>
        <begin position="1"/>
        <end position="85"/>
    </location>
</feature>
<feature type="domain" description="Tyr recombinase" evidence="2">
    <location>
        <begin position="106"/>
        <end position="285"/>
    </location>
</feature>
<feature type="active site" evidence="1">
    <location>
        <position position="146"/>
    </location>
</feature>
<feature type="active site" evidence="1">
    <location>
        <position position="170"/>
    </location>
</feature>
<feature type="active site" evidence="1">
    <location>
        <position position="237"/>
    </location>
</feature>
<feature type="active site" evidence="1">
    <location>
        <position position="240"/>
    </location>
</feature>
<feature type="active site" evidence="1">
    <location>
        <position position="263"/>
    </location>
</feature>
<feature type="active site" description="O-(3'-phospho-DNA)-tyrosine intermediate" evidence="1">
    <location>
        <position position="272"/>
    </location>
</feature>
<name>XERC_PSEU2</name>
<comment type="function">
    <text evidence="1">Site-specific tyrosine recombinase, which acts by catalyzing the cutting and rejoining of the recombining DNA molecules. The XerC-XerD complex is essential to convert dimers of the bacterial chromosome into monomers to permit their segregation at cell division. It also contributes to the segregational stability of plasmids.</text>
</comment>
<comment type="subunit">
    <text evidence="1">Forms a cyclic heterotetrameric complex composed of two molecules of XerC and two molecules of XerD.</text>
</comment>
<comment type="subcellular location">
    <subcellularLocation>
        <location evidence="1">Cytoplasm</location>
    </subcellularLocation>
</comment>
<comment type="similarity">
    <text evidence="1">Belongs to the 'phage' integrase family. XerC subfamily.</text>
</comment>
<keyword id="KW-0131">Cell cycle</keyword>
<keyword id="KW-0132">Cell division</keyword>
<keyword id="KW-0159">Chromosome partition</keyword>
<keyword id="KW-0963">Cytoplasm</keyword>
<keyword id="KW-0229">DNA integration</keyword>
<keyword id="KW-0233">DNA recombination</keyword>
<keyword id="KW-0238">DNA-binding</keyword>
<evidence type="ECO:0000255" key="1">
    <source>
        <dbReference type="HAMAP-Rule" id="MF_01808"/>
    </source>
</evidence>
<evidence type="ECO:0000255" key="2">
    <source>
        <dbReference type="PROSITE-ProRule" id="PRU01246"/>
    </source>
</evidence>
<evidence type="ECO:0000255" key="3">
    <source>
        <dbReference type="PROSITE-ProRule" id="PRU01248"/>
    </source>
</evidence>
<protein>
    <recommendedName>
        <fullName evidence="1">Tyrosine recombinase XerC</fullName>
    </recommendedName>
</protein>
<accession>Q500B4</accession>
<organism>
    <name type="scientific">Pseudomonas syringae pv. syringae (strain B728a)</name>
    <dbReference type="NCBI Taxonomy" id="205918"/>
    <lineage>
        <taxon>Bacteria</taxon>
        <taxon>Pseudomonadati</taxon>
        <taxon>Pseudomonadota</taxon>
        <taxon>Gammaproteobacteria</taxon>
        <taxon>Pseudomonadales</taxon>
        <taxon>Pseudomonadaceae</taxon>
        <taxon>Pseudomonas</taxon>
        <taxon>Pseudomonas syringae</taxon>
    </lineage>
</organism>
<dbReference type="EMBL" id="CP000075">
    <property type="protein sequence ID" value="AAY35258.1"/>
    <property type="molecule type" value="Genomic_DNA"/>
</dbReference>
<dbReference type="RefSeq" id="WP_011266244.1">
    <property type="nucleotide sequence ID" value="NC_007005.1"/>
</dbReference>
<dbReference type="RefSeq" id="YP_233296.1">
    <property type="nucleotide sequence ID" value="NC_007005.1"/>
</dbReference>
<dbReference type="SMR" id="Q500B4"/>
<dbReference type="STRING" id="205918.Psyr_0185"/>
<dbReference type="KEGG" id="psb:Psyr_0185"/>
<dbReference type="PATRIC" id="fig|205918.7.peg.181"/>
<dbReference type="eggNOG" id="COG4973">
    <property type="taxonomic scope" value="Bacteria"/>
</dbReference>
<dbReference type="HOGENOM" id="CLU_027562_9_0_6"/>
<dbReference type="OrthoDB" id="9801717at2"/>
<dbReference type="Proteomes" id="UP000000426">
    <property type="component" value="Chromosome"/>
</dbReference>
<dbReference type="GO" id="GO:0005737">
    <property type="term" value="C:cytoplasm"/>
    <property type="evidence" value="ECO:0007669"/>
    <property type="project" value="UniProtKB-SubCell"/>
</dbReference>
<dbReference type="GO" id="GO:0003677">
    <property type="term" value="F:DNA binding"/>
    <property type="evidence" value="ECO:0007669"/>
    <property type="project" value="UniProtKB-KW"/>
</dbReference>
<dbReference type="GO" id="GO:0009037">
    <property type="term" value="F:tyrosine-based site-specific recombinase activity"/>
    <property type="evidence" value="ECO:0007669"/>
    <property type="project" value="UniProtKB-UniRule"/>
</dbReference>
<dbReference type="GO" id="GO:0051301">
    <property type="term" value="P:cell division"/>
    <property type="evidence" value="ECO:0007669"/>
    <property type="project" value="UniProtKB-KW"/>
</dbReference>
<dbReference type="GO" id="GO:0007059">
    <property type="term" value="P:chromosome segregation"/>
    <property type="evidence" value="ECO:0007669"/>
    <property type="project" value="UniProtKB-UniRule"/>
</dbReference>
<dbReference type="GO" id="GO:0006313">
    <property type="term" value="P:DNA transposition"/>
    <property type="evidence" value="ECO:0007669"/>
    <property type="project" value="UniProtKB-UniRule"/>
</dbReference>
<dbReference type="CDD" id="cd00798">
    <property type="entry name" value="INT_XerDC_C"/>
    <property type="match status" value="1"/>
</dbReference>
<dbReference type="Gene3D" id="1.10.150.130">
    <property type="match status" value="1"/>
</dbReference>
<dbReference type="Gene3D" id="1.10.443.10">
    <property type="entry name" value="Intergrase catalytic core"/>
    <property type="match status" value="1"/>
</dbReference>
<dbReference type="HAMAP" id="MF_01808">
    <property type="entry name" value="Recomb_XerC_XerD"/>
    <property type="match status" value="1"/>
</dbReference>
<dbReference type="InterPro" id="IPR044068">
    <property type="entry name" value="CB"/>
</dbReference>
<dbReference type="InterPro" id="IPR011010">
    <property type="entry name" value="DNA_brk_join_enz"/>
</dbReference>
<dbReference type="InterPro" id="IPR013762">
    <property type="entry name" value="Integrase-like_cat_sf"/>
</dbReference>
<dbReference type="InterPro" id="IPR002104">
    <property type="entry name" value="Integrase_catalytic"/>
</dbReference>
<dbReference type="InterPro" id="IPR010998">
    <property type="entry name" value="Integrase_recombinase_N"/>
</dbReference>
<dbReference type="InterPro" id="IPR004107">
    <property type="entry name" value="Integrase_SAM-like_N"/>
</dbReference>
<dbReference type="InterPro" id="IPR011931">
    <property type="entry name" value="Recomb_XerC"/>
</dbReference>
<dbReference type="InterPro" id="IPR023009">
    <property type="entry name" value="Tyrosine_recombinase_XerC/XerD"/>
</dbReference>
<dbReference type="InterPro" id="IPR050090">
    <property type="entry name" value="Tyrosine_recombinase_XerCD"/>
</dbReference>
<dbReference type="NCBIfam" id="NF001399">
    <property type="entry name" value="PRK00283.1"/>
    <property type="match status" value="1"/>
</dbReference>
<dbReference type="NCBIfam" id="TIGR02224">
    <property type="entry name" value="recomb_XerC"/>
    <property type="match status" value="1"/>
</dbReference>
<dbReference type="PANTHER" id="PTHR30349">
    <property type="entry name" value="PHAGE INTEGRASE-RELATED"/>
    <property type="match status" value="1"/>
</dbReference>
<dbReference type="PANTHER" id="PTHR30349:SF81">
    <property type="entry name" value="TYROSINE RECOMBINASE XERC"/>
    <property type="match status" value="1"/>
</dbReference>
<dbReference type="Pfam" id="PF02899">
    <property type="entry name" value="Phage_int_SAM_1"/>
    <property type="match status" value="1"/>
</dbReference>
<dbReference type="Pfam" id="PF00589">
    <property type="entry name" value="Phage_integrase"/>
    <property type="match status" value="1"/>
</dbReference>
<dbReference type="SUPFAM" id="SSF56349">
    <property type="entry name" value="DNA breaking-rejoining enzymes"/>
    <property type="match status" value="1"/>
</dbReference>
<dbReference type="PROSITE" id="PS51900">
    <property type="entry name" value="CB"/>
    <property type="match status" value="1"/>
</dbReference>
<dbReference type="PROSITE" id="PS51898">
    <property type="entry name" value="TYR_RECOMBINASE"/>
    <property type="match status" value="1"/>
</dbReference>